<accession>A5VJ58</accession>
<gene>
    <name evidence="1" type="primary">dapA</name>
    <name type="ordered locus">Lreu_0615</name>
</gene>
<evidence type="ECO:0000255" key="1">
    <source>
        <dbReference type="HAMAP-Rule" id="MF_00418"/>
    </source>
</evidence>
<evidence type="ECO:0000305" key="2"/>
<proteinExistence type="inferred from homology"/>
<comment type="function">
    <text evidence="1">Catalyzes the condensation of (S)-aspartate-beta-semialdehyde [(S)-ASA] and pyruvate to 4-hydroxy-tetrahydrodipicolinate (HTPA).</text>
</comment>
<comment type="catalytic activity">
    <reaction evidence="1">
        <text>L-aspartate 4-semialdehyde + pyruvate = (2S,4S)-4-hydroxy-2,3,4,5-tetrahydrodipicolinate + H2O + H(+)</text>
        <dbReference type="Rhea" id="RHEA:34171"/>
        <dbReference type="ChEBI" id="CHEBI:15361"/>
        <dbReference type="ChEBI" id="CHEBI:15377"/>
        <dbReference type="ChEBI" id="CHEBI:15378"/>
        <dbReference type="ChEBI" id="CHEBI:67139"/>
        <dbReference type="ChEBI" id="CHEBI:537519"/>
        <dbReference type="EC" id="4.3.3.7"/>
    </reaction>
</comment>
<comment type="pathway">
    <text evidence="1">Amino-acid biosynthesis; L-lysine biosynthesis via DAP pathway; (S)-tetrahydrodipicolinate from L-aspartate: step 3/4.</text>
</comment>
<comment type="subunit">
    <text evidence="1">Homotetramer; dimer of dimers.</text>
</comment>
<comment type="subcellular location">
    <subcellularLocation>
        <location evidence="1">Cytoplasm</location>
    </subcellularLocation>
</comment>
<comment type="similarity">
    <text evidence="1">Belongs to the DapA family.</text>
</comment>
<comment type="caution">
    <text evidence="2">Was originally thought to be a dihydrodipicolinate synthase (DHDPS), catalyzing the condensation of (S)-aspartate-beta-semialdehyde [(S)-ASA] and pyruvate to dihydrodipicolinate (DHDP). However, it was shown in E.coli that the product of the enzymatic reaction is not dihydrodipicolinate but in fact (4S)-4-hydroxy-2,3,4,5-tetrahydro-(2S)-dipicolinic acid (HTPA), and that the consecutive dehydration reaction leading to DHDP is not spontaneous but catalyzed by DapB.</text>
</comment>
<name>DAPA_LIMRD</name>
<protein>
    <recommendedName>
        <fullName evidence="1">4-hydroxy-tetrahydrodipicolinate synthase</fullName>
        <shortName evidence="1">HTPA synthase</shortName>
        <ecNumber evidence="1">4.3.3.7</ecNumber>
    </recommendedName>
</protein>
<organism>
    <name type="scientific">Limosilactobacillus reuteri (strain DSM 20016)</name>
    <name type="common">Lactobacillus reuteri</name>
    <dbReference type="NCBI Taxonomy" id="557436"/>
    <lineage>
        <taxon>Bacteria</taxon>
        <taxon>Bacillati</taxon>
        <taxon>Bacillota</taxon>
        <taxon>Bacilli</taxon>
        <taxon>Lactobacillales</taxon>
        <taxon>Lactobacillaceae</taxon>
        <taxon>Limosilactobacillus</taxon>
    </lineage>
</organism>
<keyword id="KW-0028">Amino-acid biosynthesis</keyword>
<keyword id="KW-0963">Cytoplasm</keyword>
<keyword id="KW-0220">Diaminopimelate biosynthesis</keyword>
<keyword id="KW-0456">Lyase</keyword>
<keyword id="KW-0457">Lysine biosynthesis</keyword>
<keyword id="KW-1185">Reference proteome</keyword>
<keyword id="KW-0704">Schiff base</keyword>
<sequence>MTLLQNADLMTAIVTPFDDEENIDYGRLEYLTNYLIEHGSNGFVIGGTTGETPELTHDEKIELYQHFGEIVNGRVPVIAGTGSNNTKETIAFTNEVAQINGIDYALVVVPPYNKPNQRGMVAHFTAVADSVDLPIIIYNIPGRTGVKMAQETVVELSHHQNIAAVKQCTSLEELEYIVEHRDPDFAVFTGEDAQALTARVLGANGVISVASHTYVDQMRQMYDSLYRGDYQTAGKLQRWLTPRMAALFMFPSPSPVKAVLNAQGFNVGSCRLPILPLNEEEKRKLETALSLPTNSLTAKNLPLNLGE</sequence>
<reference key="1">
    <citation type="journal article" date="2011" name="PLoS Genet.">
        <title>The evolution of host specialization in the vertebrate gut symbiont Lactobacillus reuteri.</title>
        <authorList>
            <person name="Frese S.A."/>
            <person name="Benson A.K."/>
            <person name="Tannock G.W."/>
            <person name="Loach D.M."/>
            <person name="Kim J."/>
            <person name="Zhang M."/>
            <person name="Oh P.L."/>
            <person name="Heng N.C."/>
            <person name="Patil P.B."/>
            <person name="Juge N."/>
            <person name="Mackenzie D.A."/>
            <person name="Pearson B.M."/>
            <person name="Lapidus A."/>
            <person name="Dalin E."/>
            <person name="Tice H."/>
            <person name="Goltsman E."/>
            <person name="Land M."/>
            <person name="Hauser L."/>
            <person name="Ivanova N."/>
            <person name="Kyrpides N.C."/>
            <person name="Walter J."/>
        </authorList>
    </citation>
    <scope>NUCLEOTIDE SEQUENCE [LARGE SCALE GENOMIC DNA]</scope>
    <source>
        <strain>DSM 20016</strain>
    </source>
</reference>
<feature type="chain" id="PRO_0000340963" description="4-hydroxy-tetrahydrodipicolinate synthase">
    <location>
        <begin position="1"/>
        <end position="307"/>
    </location>
</feature>
<feature type="active site" description="Proton donor/acceptor" evidence="1">
    <location>
        <position position="138"/>
    </location>
</feature>
<feature type="active site" description="Schiff-base intermediate with substrate" evidence="1">
    <location>
        <position position="166"/>
    </location>
</feature>
<feature type="binding site" evidence="1">
    <location>
        <position position="49"/>
    </location>
    <ligand>
        <name>pyruvate</name>
        <dbReference type="ChEBI" id="CHEBI:15361"/>
    </ligand>
</feature>
<feature type="binding site" evidence="1">
    <location>
        <position position="207"/>
    </location>
    <ligand>
        <name>pyruvate</name>
        <dbReference type="ChEBI" id="CHEBI:15361"/>
    </ligand>
</feature>
<feature type="site" description="Part of a proton relay during catalysis" evidence="1">
    <location>
        <position position="48"/>
    </location>
</feature>
<feature type="site" description="Part of a proton relay during catalysis" evidence="1">
    <location>
        <position position="112"/>
    </location>
</feature>
<dbReference type="EC" id="4.3.3.7" evidence="1"/>
<dbReference type="EMBL" id="CP000705">
    <property type="protein sequence ID" value="ABQ82882.1"/>
    <property type="molecule type" value="Genomic_DNA"/>
</dbReference>
<dbReference type="RefSeq" id="WP_003668292.1">
    <property type="nucleotide sequence ID" value="NC_009513.1"/>
</dbReference>
<dbReference type="SMR" id="A5VJ58"/>
<dbReference type="STRING" id="557436.Lreu_0615"/>
<dbReference type="KEGG" id="lre:Lreu_0615"/>
<dbReference type="PATRIC" id="fig|557436.17.peg.687"/>
<dbReference type="eggNOG" id="COG0329">
    <property type="taxonomic scope" value="Bacteria"/>
</dbReference>
<dbReference type="HOGENOM" id="CLU_049343_7_1_9"/>
<dbReference type="UniPathway" id="UPA00034">
    <property type="reaction ID" value="UER00017"/>
</dbReference>
<dbReference type="Proteomes" id="UP000001991">
    <property type="component" value="Chromosome"/>
</dbReference>
<dbReference type="GO" id="GO:0005829">
    <property type="term" value="C:cytosol"/>
    <property type="evidence" value="ECO:0007669"/>
    <property type="project" value="TreeGrafter"/>
</dbReference>
<dbReference type="GO" id="GO:0008840">
    <property type="term" value="F:4-hydroxy-tetrahydrodipicolinate synthase activity"/>
    <property type="evidence" value="ECO:0007669"/>
    <property type="project" value="UniProtKB-UniRule"/>
</dbReference>
<dbReference type="GO" id="GO:0019877">
    <property type="term" value="P:diaminopimelate biosynthetic process"/>
    <property type="evidence" value="ECO:0007669"/>
    <property type="project" value="UniProtKB-UniRule"/>
</dbReference>
<dbReference type="GO" id="GO:0009089">
    <property type="term" value="P:lysine biosynthetic process via diaminopimelate"/>
    <property type="evidence" value="ECO:0007669"/>
    <property type="project" value="UniProtKB-UniRule"/>
</dbReference>
<dbReference type="CDD" id="cd00950">
    <property type="entry name" value="DHDPS"/>
    <property type="match status" value="1"/>
</dbReference>
<dbReference type="Gene3D" id="3.20.20.70">
    <property type="entry name" value="Aldolase class I"/>
    <property type="match status" value="1"/>
</dbReference>
<dbReference type="HAMAP" id="MF_00418">
    <property type="entry name" value="DapA"/>
    <property type="match status" value="1"/>
</dbReference>
<dbReference type="InterPro" id="IPR013785">
    <property type="entry name" value="Aldolase_TIM"/>
</dbReference>
<dbReference type="InterPro" id="IPR005263">
    <property type="entry name" value="DapA"/>
</dbReference>
<dbReference type="InterPro" id="IPR002220">
    <property type="entry name" value="DapA-like"/>
</dbReference>
<dbReference type="InterPro" id="IPR020625">
    <property type="entry name" value="Schiff_base-form_aldolases_AS"/>
</dbReference>
<dbReference type="NCBIfam" id="TIGR00674">
    <property type="entry name" value="dapA"/>
    <property type="match status" value="1"/>
</dbReference>
<dbReference type="PANTHER" id="PTHR12128:SF66">
    <property type="entry name" value="4-HYDROXY-2-OXOGLUTARATE ALDOLASE, MITOCHONDRIAL"/>
    <property type="match status" value="1"/>
</dbReference>
<dbReference type="PANTHER" id="PTHR12128">
    <property type="entry name" value="DIHYDRODIPICOLINATE SYNTHASE"/>
    <property type="match status" value="1"/>
</dbReference>
<dbReference type="Pfam" id="PF00701">
    <property type="entry name" value="DHDPS"/>
    <property type="match status" value="1"/>
</dbReference>
<dbReference type="PIRSF" id="PIRSF001365">
    <property type="entry name" value="DHDPS"/>
    <property type="match status" value="1"/>
</dbReference>
<dbReference type="PRINTS" id="PR00146">
    <property type="entry name" value="DHPICSNTHASE"/>
</dbReference>
<dbReference type="SMART" id="SM01130">
    <property type="entry name" value="DHDPS"/>
    <property type="match status" value="1"/>
</dbReference>
<dbReference type="SUPFAM" id="SSF51569">
    <property type="entry name" value="Aldolase"/>
    <property type="match status" value="1"/>
</dbReference>
<dbReference type="PROSITE" id="PS00666">
    <property type="entry name" value="DHDPS_2"/>
    <property type="match status" value="1"/>
</dbReference>